<name>PIMT_ALIF1</name>
<comment type="function">
    <text evidence="1">Catalyzes the methyl esterification of L-isoaspartyl residues in peptides and proteins that result from spontaneous decomposition of normal L-aspartyl and L-asparaginyl residues. It plays a role in the repair and/or degradation of damaged proteins.</text>
</comment>
<comment type="catalytic activity">
    <reaction evidence="1">
        <text>[protein]-L-isoaspartate + S-adenosyl-L-methionine = [protein]-L-isoaspartate alpha-methyl ester + S-adenosyl-L-homocysteine</text>
        <dbReference type="Rhea" id="RHEA:12705"/>
        <dbReference type="Rhea" id="RHEA-COMP:12143"/>
        <dbReference type="Rhea" id="RHEA-COMP:12144"/>
        <dbReference type="ChEBI" id="CHEBI:57856"/>
        <dbReference type="ChEBI" id="CHEBI:59789"/>
        <dbReference type="ChEBI" id="CHEBI:90596"/>
        <dbReference type="ChEBI" id="CHEBI:90598"/>
        <dbReference type="EC" id="2.1.1.77"/>
    </reaction>
</comment>
<comment type="subcellular location">
    <subcellularLocation>
        <location evidence="1">Cytoplasm</location>
    </subcellularLocation>
</comment>
<comment type="similarity">
    <text evidence="1">Belongs to the methyltransferase superfamily. L-isoaspartyl/D-aspartyl protein methyltransferase family.</text>
</comment>
<organism>
    <name type="scientific">Aliivibrio fischeri (strain ATCC 700601 / ES114)</name>
    <name type="common">Vibrio fischeri</name>
    <dbReference type="NCBI Taxonomy" id="312309"/>
    <lineage>
        <taxon>Bacteria</taxon>
        <taxon>Pseudomonadati</taxon>
        <taxon>Pseudomonadota</taxon>
        <taxon>Gammaproteobacteria</taxon>
        <taxon>Vibrionales</taxon>
        <taxon>Vibrionaceae</taxon>
        <taxon>Aliivibrio</taxon>
    </lineage>
</organism>
<accession>Q5E332</accession>
<gene>
    <name evidence="1" type="primary">pcm</name>
    <name type="ordered locus">VF_2069</name>
</gene>
<protein>
    <recommendedName>
        <fullName evidence="1">Protein-L-isoaspartate O-methyltransferase</fullName>
        <ecNumber evidence="1">2.1.1.77</ecNumber>
    </recommendedName>
    <alternativeName>
        <fullName evidence="1">L-isoaspartyl protein carboxyl methyltransferase</fullName>
    </alternativeName>
    <alternativeName>
        <fullName evidence="1">Protein L-isoaspartyl methyltransferase</fullName>
    </alternativeName>
    <alternativeName>
        <fullName evidence="1">Protein-beta-aspartate methyltransferase</fullName>
        <shortName evidence="1">PIMT</shortName>
    </alternativeName>
</protein>
<reference key="1">
    <citation type="journal article" date="2005" name="Proc. Natl. Acad. Sci. U.S.A.">
        <title>Complete genome sequence of Vibrio fischeri: a symbiotic bacterium with pathogenic congeners.</title>
        <authorList>
            <person name="Ruby E.G."/>
            <person name="Urbanowski M."/>
            <person name="Campbell J."/>
            <person name="Dunn A."/>
            <person name="Faini M."/>
            <person name="Gunsalus R."/>
            <person name="Lostroh P."/>
            <person name="Lupp C."/>
            <person name="McCann J."/>
            <person name="Millikan D."/>
            <person name="Schaefer A."/>
            <person name="Stabb E."/>
            <person name="Stevens A."/>
            <person name="Visick K."/>
            <person name="Whistler C."/>
            <person name="Greenberg E.P."/>
        </authorList>
    </citation>
    <scope>NUCLEOTIDE SEQUENCE [LARGE SCALE GENOMIC DNA]</scope>
    <source>
        <strain>ATCC 700601 / ES114</strain>
    </source>
</reference>
<dbReference type="EC" id="2.1.1.77" evidence="1"/>
<dbReference type="EMBL" id="CP000020">
    <property type="protein sequence ID" value="AAW86564.1"/>
    <property type="molecule type" value="Genomic_DNA"/>
</dbReference>
<dbReference type="RefSeq" id="WP_011262536.1">
    <property type="nucleotide sequence ID" value="NC_006840.2"/>
</dbReference>
<dbReference type="RefSeq" id="YP_205452.1">
    <property type="nucleotide sequence ID" value="NC_006840.2"/>
</dbReference>
<dbReference type="SMR" id="Q5E332"/>
<dbReference type="STRING" id="312309.VF_2069"/>
<dbReference type="EnsemblBacteria" id="AAW86564">
    <property type="protein sequence ID" value="AAW86564"/>
    <property type="gene ID" value="VF_2069"/>
</dbReference>
<dbReference type="GeneID" id="54164775"/>
<dbReference type="KEGG" id="vfi:VF_2069"/>
<dbReference type="PATRIC" id="fig|312309.11.peg.2112"/>
<dbReference type="eggNOG" id="COG2518">
    <property type="taxonomic scope" value="Bacteria"/>
</dbReference>
<dbReference type="HOGENOM" id="CLU_055432_2_0_6"/>
<dbReference type="OrthoDB" id="9810066at2"/>
<dbReference type="Proteomes" id="UP000000537">
    <property type="component" value="Chromosome I"/>
</dbReference>
<dbReference type="GO" id="GO:0005737">
    <property type="term" value="C:cytoplasm"/>
    <property type="evidence" value="ECO:0007669"/>
    <property type="project" value="UniProtKB-SubCell"/>
</dbReference>
<dbReference type="GO" id="GO:0004719">
    <property type="term" value="F:protein-L-isoaspartate (D-aspartate) O-methyltransferase activity"/>
    <property type="evidence" value="ECO:0007669"/>
    <property type="project" value="UniProtKB-UniRule"/>
</dbReference>
<dbReference type="GO" id="GO:0032259">
    <property type="term" value="P:methylation"/>
    <property type="evidence" value="ECO:0007669"/>
    <property type="project" value="UniProtKB-KW"/>
</dbReference>
<dbReference type="GO" id="GO:0036211">
    <property type="term" value="P:protein modification process"/>
    <property type="evidence" value="ECO:0007669"/>
    <property type="project" value="UniProtKB-UniRule"/>
</dbReference>
<dbReference type="GO" id="GO:0030091">
    <property type="term" value="P:protein repair"/>
    <property type="evidence" value="ECO:0007669"/>
    <property type="project" value="UniProtKB-UniRule"/>
</dbReference>
<dbReference type="CDD" id="cd02440">
    <property type="entry name" value="AdoMet_MTases"/>
    <property type="match status" value="1"/>
</dbReference>
<dbReference type="FunFam" id="3.40.50.150:FF:000010">
    <property type="entry name" value="Protein-L-isoaspartate O-methyltransferase"/>
    <property type="match status" value="1"/>
</dbReference>
<dbReference type="Gene3D" id="3.40.50.150">
    <property type="entry name" value="Vaccinia Virus protein VP39"/>
    <property type="match status" value="1"/>
</dbReference>
<dbReference type="HAMAP" id="MF_00090">
    <property type="entry name" value="PIMT"/>
    <property type="match status" value="1"/>
</dbReference>
<dbReference type="InterPro" id="IPR000682">
    <property type="entry name" value="PCMT"/>
</dbReference>
<dbReference type="InterPro" id="IPR029063">
    <property type="entry name" value="SAM-dependent_MTases_sf"/>
</dbReference>
<dbReference type="NCBIfam" id="TIGR00080">
    <property type="entry name" value="pimt"/>
    <property type="match status" value="1"/>
</dbReference>
<dbReference type="NCBIfam" id="NF001453">
    <property type="entry name" value="PRK00312.1"/>
    <property type="match status" value="1"/>
</dbReference>
<dbReference type="PANTHER" id="PTHR11579">
    <property type="entry name" value="PROTEIN-L-ISOASPARTATE O-METHYLTRANSFERASE"/>
    <property type="match status" value="1"/>
</dbReference>
<dbReference type="PANTHER" id="PTHR11579:SF0">
    <property type="entry name" value="PROTEIN-L-ISOASPARTATE(D-ASPARTATE) O-METHYLTRANSFERASE"/>
    <property type="match status" value="1"/>
</dbReference>
<dbReference type="Pfam" id="PF01135">
    <property type="entry name" value="PCMT"/>
    <property type="match status" value="1"/>
</dbReference>
<dbReference type="SUPFAM" id="SSF53335">
    <property type="entry name" value="S-adenosyl-L-methionine-dependent methyltransferases"/>
    <property type="match status" value="1"/>
</dbReference>
<dbReference type="PROSITE" id="PS01279">
    <property type="entry name" value="PCMT"/>
    <property type="match status" value="1"/>
</dbReference>
<proteinExistence type="inferred from homology"/>
<feature type="chain" id="PRO_0000351949" description="Protein-L-isoaspartate O-methyltransferase">
    <location>
        <begin position="1"/>
        <end position="208"/>
    </location>
</feature>
<feature type="active site" evidence="1">
    <location>
        <position position="59"/>
    </location>
</feature>
<keyword id="KW-0963">Cytoplasm</keyword>
<keyword id="KW-0489">Methyltransferase</keyword>
<keyword id="KW-1185">Reference proteome</keyword>
<keyword id="KW-0949">S-adenosyl-L-methionine</keyword>
<keyword id="KW-0808">Transferase</keyword>
<evidence type="ECO:0000255" key="1">
    <source>
        <dbReference type="HAMAP-Rule" id="MF_00090"/>
    </source>
</evidence>
<sequence length="208" mass="23301">MLNSRSELLDQFLRQQGIRDEAILAAIRELPRERFIPEALSHQAYQNNALPIGEGQTISQPYIVAKMTELLELTPTSNVLEVGTGSGYQTAVLAKLVEHVNSIERIKSLQWNAKRLLKQLDIYNVSTKHGDGWKGWESKAPFDAIIVTAAAESIPNDLLFQLKDNGHLVIPIGEESQQLLRITRQGEEFFSEVIEEVRFVPLVAGELA</sequence>